<keyword id="KW-1185">Reference proteome</keyword>
<evidence type="ECO:0000269" key="1">
    <source>
    </source>
</evidence>
<evidence type="ECO:0000305" key="2"/>
<proteinExistence type="evidence at transcript level"/>
<reference key="1">
    <citation type="journal article" date="2005" name="Science">
        <title>The transcriptional landscape of the mammalian genome.</title>
        <authorList>
            <person name="Carninci P."/>
            <person name="Kasukawa T."/>
            <person name="Katayama S."/>
            <person name="Gough J."/>
            <person name="Frith M.C."/>
            <person name="Maeda N."/>
            <person name="Oyama R."/>
            <person name="Ravasi T."/>
            <person name="Lenhard B."/>
            <person name="Wells C."/>
            <person name="Kodzius R."/>
            <person name="Shimokawa K."/>
            <person name="Bajic V.B."/>
            <person name="Brenner S.E."/>
            <person name="Batalov S."/>
            <person name="Forrest A.R."/>
            <person name="Zavolan M."/>
            <person name="Davis M.J."/>
            <person name="Wilming L.G."/>
            <person name="Aidinis V."/>
            <person name="Allen J.E."/>
            <person name="Ambesi-Impiombato A."/>
            <person name="Apweiler R."/>
            <person name="Aturaliya R.N."/>
            <person name="Bailey T.L."/>
            <person name="Bansal M."/>
            <person name="Baxter L."/>
            <person name="Beisel K.W."/>
            <person name="Bersano T."/>
            <person name="Bono H."/>
            <person name="Chalk A.M."/>
            <person name="Chiu K.P."/>
            <person name="Choudhary V."/>
            <person name="Christoffels A."/>
            <person name="Clutterbuck D.R."/>
            <person name="Crowe M.L."/>
            <person name="Dalla E."/>
            <person name="Dalrymple B.P."/>
            <person name="de Bono B."/>
            <person name="Della Gatta G."/>
            <person name="di Bernardo D."/>
            <person name="Down T."/>
            <person name="Engstrom P."/>
            <person name="Fagiolini M."/>
            <person name="Faulkner G."/>
            <person name="Fletcher C.F."/>
            <person name="Fukushima T."/>
            <person name="Furuno M."/>
            <person name="Futaki S."/>
            <person name="Gariboldi M."/>
            <person name="Georgii-Hemming P."/>
            <person name="Gingeras T.R."/>
            <person name="Gojobori T."/>
            <person name="Green R.E."/>
            <person name="Gustincich S."/>
            <person name="Harbers M."/>
            <person name="Hayashi Y."/>
            <person name="Hensch T.K."/>
            <person name="Hirokawa N."/>
            <person name="Hill D."/>
            <person name="Huminiecki L."/>
            <person name="Iacono M."/>
            <person name="Ikeo K."/>
            <person name="Iwama A."/>
            <person name="Ishikawa T."/>
            <person name="Jakt M."/>
            <person name="Kanapin A."/>
            <person name="Katoh M."/>
            <person name="Kawasawa Y."/>
            <person name="Kelso J."/>
            <person name="Kitamura H."/>
            <person name="Kitano H."/>
            <person name="Kollias G."/>
            <person name="Krishnan S.P."/>
            <person name="Kruger A."/>
            <person name="Kummerfeld S.K."/>
            <person name="Kurochkin I.V."/>
            <person name="Lareau L.F."/>
            <person name="Lazarevic D."/>
            <person name="Lipovich L."/>
            <person name="Liu J."/>
            <person name="Liuni S."/>
            <person name="McWilliam S."/>
            <person name="Madan Babu M."/>
            <person name="Madera M."/>
            <person name="Marchionni L."/>
            <person name="Matsuda H."/>
            <person name="Matsuzawa S."/>
            <person name="Miki H."/>
            <person name="Mignone F."/>
            <person name="Miyake S."/>
            <person name="Morris K."/>
            <person name="Mottagui-Tabar S."/>
            <person name="Mulder N."/>
            <person name="Nakano N."/>
            <person name="Nakauchi H."/>
            <person name="Ng P."/>
            <person name="Nilsson R."/>
            <person name="Nishiguchi S."/>
            <person name="Nishikawa S."/>
            <person name="Nori F."/>
            <person name="Ohara O."/>
            <person name="Okazaki Y."/>
            <person name="Orlando V."/>
            <person name="Pang K.C."/>
            <person name="Pavan W.J."/>
            <person name="Pavesi G."/>
            <person name="Pesole G."/>
            <person name="Petrovsky N."/>
            <person name="Piazza S."/>
            <person name="Reed J."/>
            <person name="Reid J.F."/>
            <person name="Ring B.Z."/>
            <person name="Ringwald M."/>
            <person name="Rost B."/>
            <person name="Ruan Y."/>
            <person name="Salzberg S.L."/>
            <person name="Sandelin A."/>
            <person name="Schneider C."/>
            <person name="Schoenbach C."/>
            <person name="Sekiguchi K."/>
            <person name="Semple C.A."/>
            <person name="Seno S."/>
            <person name="Sessa L."/>
            <person name="Sheng Y."/>
            <person name="Shibata Y."/>
            <person name="Shimada H."/>
            <person name="Shimada K."/>
            <person name="Silva D."/>
            <person name="Sinclair B."/>
            <person name="Sperling S."/>
            <person name="Stupka E."/>
            <person name="Sugiura K."/>
            <person name="Sultana R."/>
            <person name="Takenaka Y."/>
            <person name="Taki K."/>
            <person name="Tammoja K."/>
            <person name="Tan S.L."/>
            <person name="Tang S."/>
            <person name="Taylor M.S."/>
            <person name="Tegner J."/>
            <person name="Teichmann S.A."/>
            <person name="Ueda H.R."/>
            <person name="van Nimwegen E."/>
            <person name="Verardo R."/>
            <person name="Wei C.L."/>
            <person name="Yagi K."/>
            <person name="Yamanishi H."/>
            <person name="Zabarovsky E."/>
            <person name="Zhu S."/>
            <person name="Zimmer A."/>
            <person name="Hide W."/>
            <person name="Bult C."/>
            <person name="Grimmond S.M."/>
            <person name="Teasdale R.D."/>
            <person name="Liu E.T."/>
            <person name="Brusic V."/>
            <person name="Quackenbush J."/>
            <person name="Wahlestedt C."/>
            <person name="Mattick J.S."/>
            <person name="Hume D.A."/>
            <person name="Kai C."/>
            <person name="Sasaki D."/>
            <person name="Tomaru Y."/>
            <person name="Fukuda S."/>
            <person name="Kanamori-Katayama M."/>
            <person name="Suzuki M."/>
            <person name="Aoki J."/>
            <person name="Arakawa T."/>
            <person name="Iida J."/>
            <person name="Imamura K."/>
            <person name="Itoh M."/>
            <person name="Kato T."/>
            <person name="Kawaji H."/>
            <person name="Kawagashira N."/>
            <person name="Kawashima T."/>
            <person name="Kojima M."/>
            <person name="Kondo S."/>
            <person name="Konno H."/>
            <person name="Nakano K."/>
            <person name="Ninomiya N."/>
            <person name="Nishio T."/>
            <person name="Okada M."/>
            <person name="Plessy C."/>
            <person name="Shibata K."/>
            <person name="Shiraki T."/>
            <person name="Suzuki S."/>
            <person name="Tagami M."/>
            <person name="Waki K."/>
            <person name="Watahiki A."/>
            <person name="Okamura-Oho Y."/>
            <person name="Suzuki H."/>
            <person name="Kawai J."/>
            <person name="Hayashizaki Y."/>
        </authorList>
    </citation>
    <scope>NUCLEOTIDE SEQUENCE [LARGE SCALE MRNA]</scope>
    <source>
        <strain>C57BL/6J</strain>
        <tissue>Tongue</tissue>
    </source>
</reference>
<reference key="2">
    <citation type="journal article" date="2004" name="Genome Res.">
        <title>The status, quality, and expansion of the NIH full-length cDNA project: the Mammalian Gene Collection (MGC).</title>
        <authorList>
            <consortium name="The MGC Project Team"/>
        </authorList>
    </citation>
    <scope>NUCLEOTIDE SEQUENCE [LARGE SCALE MRNA]</scope>
</reference>
<reference key="3">
    <citation type="journal article" date="2008" name="Physiol. Genomics">
        <title>Tissue expression patterns identify mouse cilia genes.</title>
        <authorList>
            <person name="McClintock T.S."/>
            <person name="Glasser C.E."/>
            <person name="Bose S.C."/>
            <person name="Bergman D.A."/>
        </authorList>
    </citation>
    <scope>TISSUE SPECIFICITY</scope>
</reference>
<dbReference type="EMBL" id="AK009192">
    <property type="protein sequence ID" value="BAB26132.1"/>
    <property type="molecule type" value="mRNA"/>
</dbReference>
<dbReference type="EMBL" id="BC107021">
    <property type="protein sequence ID" value="AAI07022.1"/>
    <property type="status" value="ALT_SEQ"/>
    <property type="molecule type" value="mRNA"/>
</dbReference>
<dbReference type="CCDS" id="CCDS38535.1"/>
<dbReference type="RefSeq" id="NP_079782.1">
    <property type="nucleotide sequence ID" value="NM_025506.2"/>
</dbReference>
<dbReference type="RefSeq" id="XP_011238492.1">
    <property type="nucleotide sequence ID" value="XM_011240190.2"/>
</dbReference>
<dbReference type="RefSeq" id="XP_036019117.1">
    <property type="nucleotide sequence ID" value="XM_036163224.1"/>
</dbReference>
<dbReference type="BioGRID" id="211405">
    <property type="interactions" value="1"/>
</dbReference>
<dbReference type="FunCoup" id="Q3KNY5">
    <property type="interactions" value="1"/>
</dbReference>
<dbReference type="STRING" id="10090.ENSMUSP00000029785"/>
<dbReference type="iPTMnet" id="Q3KNY5"/>
<dbReference type="PhosphoSitePlus" id="Q3KNY5"/>
<dbReference type="PaxDb" id="10090-ENSMUSP00000029785"/>
<dbReference type="ProteomicsDB" id="255268"/>
<dbReference type="Antibodypedia" id="50162">
    <property type="antibodies" value="16 antibodies from 8 providers"/>
</dbReference>
<dbReference type="DNASU" id="66353"/>
<dbReference type="Ensembl" id="ENSMUST00000029785.4">
    <property type="protein sequence ID" value="ENSMUSP00000029785.3"/>
    <property type="gene ID" value="ENSMUSG00000028139.6"/>
</dbReference>
<dbReference type="GeneID" id="66353"/>
<dbReference type="UCSC" id="uc008qgk.1">
    <property type="organism name" value="mouse"/>
</dbReference>
<dbReference type="AGR" id="MGI:1913603"/>
<dbReference type="CTD" id="284485"/>
<dbReference type="MGI" id="MGI:1913603">
    <property type="gene designation" value="Riiad1"/>
</dbReference>
<dbReference type="VEuPathDB" id="HostDB:ENSMUSG00000028139"/>
<dbReference type="eggNOG" id="ENOG502S8ZF">
    <property type="taxonomic scope" value="Eukaryota"/>
</dbReference>
<dbReference type="GeneTree" id="ENSGT00390000003062"/>
<dbReference type="HOGENOM" id="CLU_144881_1_0_1"/>
<dbReference type="InParanoid" id="Q3KNY5"/>
<dbReference type="OMA" id="EGMEPYD"/>
<dbReference type="OrthoDB" id="10249338at2759"/>
<dbReference type="PhylomeDB" id="Q3KNY5"/>
<dbReference type="TreeFam" id="TF328360"/>
<dbReference type="BioGRID-ORCS" id="66353">
    <property type="hits" value="4 hits in 77 CRISPR screens"/>
</dbReference>
<dbReference type="ChiTaRS" id="Riiad1">
    <property type="organism name" value="mouse"/>
</dbReference>
<dbReference type="PRO" id="PR:Q3KNY5"/>
<dbReference type="Proteomes" id="UP000000589">
    <property type="component" value="Chromosome 3"/>
</dbReference>
<dbReference type="RNAct" id="Q3KNY5">
    <property type="molecule type" value="protein"/>
</dbReference>
<dbReference type="Bgee" id="ENSMUSG00000028139">
    <property type="expression patterns" value="Expressed in spermatid and 87 other cell types or tissues"/>
</dbReference>
<dbReference type="CDD" id="cd22971">
    <property type="entry name" value="DD_RIIAD1"/>
    <property type="match status" value="1"/>
</dbReference>
<dbReference type="PANTHER" id="PTHR15505">
    <property type="entry name" value="RIIA DOMAIN-CONTAINING PROTEIN 1"/>
    <property type="match status" value="1"/>
</dbReference>
<dbReference type="PANTHER" id="PTHR15505:SF4">
    <property type="entry name" value="RIIA DOMAIN-CONTAINING PROTEIN 1"/>
    <property type="match status" value="1"/>
</dbReference>
<dbReference type="SUPFAM" id="SSF47391">
    <property type="entry name" value="Dimerization-anchoring domain of cAMP-dependent PK regulatory subunit"/>
    <property type="match status" value="1"/>
</dbReference>
<accession>Q3KNY5</accession>
<accession>Q9D7J0</accession>
<gene>
    <name type="primary">Riiad1</name>
</gene>
<organism>
    <name type="scientific">Mus musculus</name>
    <name type="common">Mouse</name>
    <dbReference type="NCBI Taxonomy" id="10090"/>
    <lineage>
        <taxon>Eukaryota</taxon>
        <taxon>Metazoa</taxon>
        <taxon>Chordata</taxon>
        <taxon>Craniata</taxon>
        <taxon>Vertebrata</taxon>
        <taxon>Euteleostomi</taxon>
        <taxon>Mammalia</taxon>
        <taxon>Eutheria</taxon>
        <taxon>Euarchontoglires</taxon>
        <taxon>Glires</taxon>
        <taxon>Rodentia</taxon>
        <taxon>Myomorpha</taxon>
        <taxon>Muroidea</taxon>
        <taxon>Muridae</taxon>
        <taxon>Murinae</taxon>
        <taxon>Mus</taxon>
        <taxon>Mus</taxon>
    </lineage>
</organism>
<name>RIAD1_MOUSE</name>
<protein>
    <recommendedName>
        <fullName>RIIa domain-containing protein 1</fullName>
    </recommendedName>
</protein>
<sequence>MECSASAPEGREEAWISFGKHNNRVCLMETRGHGIVGPDPGTLNPEQLEQLRDFKIQTRIANEKYLRTHKEVSLLISGFFREMFLKRPDNILEFAAHYFTDPRLPSRIHMQLIKEKKGT</sequence>
<feature type="chain" id="PRO_0000342468" description="RIIa domain-containing protein 1">
    <location>
        <begin position="1"/>
        <end position="119"/>
    </location>
</feature>
<feature type="domain" description="RIIa">
    <location>
        <begin position="70"/>
        <end position="104"/>
    </location>
</feature>
<comment type="tissue specificity">
    <text evidence="1">Abundant in tissues rich in highly ciliated cells, such as testis, trachea and olfactory epithelium.</text>
</comment>
<comment type="caution">
    <text evidence="2">It is uncertain whether Met-1 or Met-28 is the initiator.</text>
</comment>
<comment type="sequence caution" evidence="2">
    <conflict type="miscellaneous discrepancy">
        <sequence resource="EMBL-CDS" id="AAI07022"/>
    </conflict>
    <text>Probable cloning artifact.</text>
</comment>